<accession>B5E1P9</accession>
<comment type="function">
    <text evidence="1">Increases the formation of ribosomal termination complexes and stimulates activities of RF-1 and RF-2. It binds guanine nucleotides and has strong preference for UGA stop codons. It may interact directly with the ribosome. The stimulation of RF-1 and RF-2 is significantly reduced by GTP and GDP, but not by GMP.</text>
</comment>
<comment type="subcellular location">
    <subcellularLocation>
        <location evidence="1">Cytoplasm</location>
    </subcellularLocation>
</comment>
<comment type="similarity">
    <text evidence="1">Belongs to the TRAFAC class translation factor GTPase superfamily. Classic translation factor GTPase family. PrfC subfamily.</text>
</comment>
<organism>
    <name type="scientific">Streptococcus pneumoniae serotype 19F (strain G54)</name>
    <dbReference type="NCBI Taxonomy" id="512566"/>
    <lineage>
        <taxon>Bacteria</taxon>
        <taxon>Bacillati</taxon>
        <taxon>Bacillota</taxon>
        <taxon>Bacilli</taxon>
        <taxon>Lactobacillales</taxon>
        <taxon>Streptococcaceae</taxon>
        <taxon>Streptococcus</taxon>
    </lineage>
</organism>
<proteinExistence type="inferred from homology"/>
<protein>
    <recommendedName>
        <fullName evidence="1">Peptide chain release factor 3</fullName>
        <shortName evidence="1">RF-3</shortName>
    </recommendedName>
</protein>
<feature type="chain" id="PRO_1000092505" description="Peptide chain release factor 3">
    <location>
        <begin position="1"/>
        <end position="514"/>
    </location>
</feature>
<feature type="domain" description="tr-type G">
    <location>
        <begin position="8"/>
        <end position="268"/>
    </location>
</feature>
<feature type="binding site" evidence="1">
    <location>
        <begin position="17"/>
        <end position="24"/>
    </location>
    <ligand>
        <name>GTP</name>
        <dbReference type="ChEBI" id="CHEBI:37565"/>
    </ligand>
</feature>
<feature type="binding site" evidence="1">
    <location>
        <begin position="85"/>
        <end position="89"/>
    </location>
    <ligand>
        <name>GTP</name>
        <dbReference type="ChEBI" id="CHEBI:37565"/>
    </ligand>
</feature>
<feature type="binding site" evidence="1">
    <location>
        <begin position="139"/>
        <end position="142"/>
    </location>
    <ligand>
        <name>GTP</name>
        <dbReference type="ChEBI" id="CHEBI:37565"/>
    </ligand>
</feature>
<dbReference type="EMBL" id="CP001015">
    <property type="protein sequence ID" value="ACF56317.1"/>
    <property type="molecule type" value="Genomic_DNA"/>
</dbReference>
<dbReference type="KEGG" id="spx:SPG_0402"/>
<dbReference type="HOGENOM" id="CLU_002794_2_1_9"/>
<dbReference type="GO" id="GO:0005829">
    <property type="term" value="C:cytosol"/>
    <property type="evidence" value="ECO:0007669"/>
    <property type="project" value="TreeGrafter"/>
</dbReference>
<dbReference type="GO" id="GO:0005525">
    <property type="term" value="F:GTP binding"/>
    <property type="evidence" value="ECO:0007669"/>
    <property type="project" value="UniProtKB-UniRule"/>
</dbReference>
<dbReference type="GO" id="GO:0003924">
    <property type="term" value="F:GTPase activity"/>
    <property type="evidence" value="ECO:0007669"/>
    <property type="project" value="InterPro"/>
</dbReference>
<dbReference type="GO" id="GO:0016150">
    <property type="term" value="F:translation release factor activity, codon nonspecific"/>
    <property type="evidence" value="ECO:0007669"/>
    <property type="project" value="TreeGrafter"/>
</dbReference>
<dbReference type="GO" id="GO:0016149">
    <property type="term" value="F:translation release factor activity, codon specific"/>
    <property type="evidence" value="ECO:0007669"/>
    <property type="project" value="UniProtKB-UniRule"/>
</dbReference>
<dbReference type="GO" id="GO:0006449">
    <property type="term" value="P:regulation of translational termination"/>
    <property type="evidence" value="ECO:0007669"/>
    <property type="project" value="UniProtKB-UniRule"/>
</dbReference>
<dbReference type="CDD" id="cd04169">
    <property type="entry name" value="RF3"/>
    <property type="match status" value="1"/>
</dbReference>
<dbReference type="CDD" id="cd16259">
    <property type="entry name" value="RF3_III"/>
    <property type="match status" value="1"/>
</dbReference>
<dbReference type="FunFam" id="2.40.30.10:FF:000040">
    <property type="entry name" value="Peptide chain release factor 3"/>
    <property type="match status" value="1"/>
</dbReference>
<dbReference type="FunFam" id="3.30.70.3280:FF:000001">
    <property type="entry name" value="Peptide chain release factor 3"/>
    <property type="match status" value="1"/>
</dbReference>
<dbReference type="FunFam" id="3.40.50.300:FF:000542">
    <property type="entry name" value="Peptide chain release factor 3"/>
    <property type="match status" value="1"/>
</dbReference>
<dbReference type="Gene3D" id="3.40.50.300">
    <property type="entry name" value="P-loop containing nucleotide triphosphate hydrolases"/>
    <property type="match status" value="1"/>
</dbReference>
<dbReference type="Gene3D" id="3.30.70.3280">
    <property type="entry name" value="Peptide chain release factor 3, domain III"/>
    <property type="match status" value="1"/>
</dbReference>
<dbReference type="Gene3D" id="2.40.30.10">
    <property type="entry name" value="Translation factors"/>
    <property type="match status" value="1"/>
</dbReference>
<dbReference type="HAMAP" id="MF_00072">
    <property type="entry name" value="Rel_fac_3"/>
    <property type="match status" value="1"/>
</dbReference>
<dbReference type="InterPro" id="IPR053905">
    <property type="entry name" value="EF-G-like_DII"/>
</dbReference>
<dbReference type="InterPro" id="IPR035647">
    <property type="entry name" value="EFG_III/V"/>
</dbReference>
<dbReference type="InterPro" id="IPR031157">
    <property type="entry name" value="G_TR_CS"/>
</dbReference>
<dbReference type="InterPro" id="IPR027417">
    <property type="entry name" value="P-loop_NTPase"/>
</dbReference>
<dbReference type="InterPro" id="IPR004548">
    <property type="entry name" value="PrfC"/>
</dbReference>
<dbReference type="InterPro" id="IPR032090">
    <property type="entry name" value="RF3_C"/>
</dbReference>
<dbReference type="InterPro" id="IPR038467">
    <property type="entry name" value="RF3_dom_3_sf"/>
</dbReference>
<dbReference type="InterPro" id="IPR041732">
    <property type="entry name" value="RF3_GTP-bd"/>
</dbReference>
<dbReference type="InterPro" id="IPR005225">
    <property type="entry name" value="Small_GTP-bd"/>
</dbReference>
<dbReference type="InterPro" id="IPR000795">
    <property type="entry name" value="T_Tr_GTP-bd_dom"/>
</dbReference>
<dbReference type="InterPro" id="IPR009000">
    <property type="entry name" value="Transl_B-barrel_sf"/>
</dbReference>
<dbReference type="NCBIfam" id="TIGR00503">
    <property type="entry name" value="prfC"/>
    <property type="match status" value="1"/>
</dbReference>
<dbReference type="NCBIfam" id="NF001964">
    <property type="entry name" value="PRK00741.1"/>
    <property type="match status" value="1"/>
</dbReference>
<dbReference type="NCBIfam" id="TIGR00231">
    <property type="entry name" value="small_GTP"/>
    <property type="match status" value="1"/>
</dbReference>
<dbReference type="PANTHER" id="PTHR43556">
    <property type="entry name" value="PEPTIDE CHAIN RELEASE FACTOR RF3"/>
    <property type="match status" value="1"/>
</dbReference>
<dbReference type="PANTHER" id="PTHR43556:SF2">
    <property type="entry name" value="PEPTIDE CHAIN RELEASE FACTOR RF3"/>
    <property type="match status" value="1"/>
</dbReference>
<dbReference type="Pfam" id="PF22042">
    <property type="entry name" value="EF-G_D2"/>
    <property type="match status" value="1"/>
</dbReference>
<dbReference type="Pfam" id="PF00009">
    <property type="entry name" value="GTP_EFTU"/>
    <property type="match status" value="1"/>
</dbReference>
<dbReference type="Pfam" id="PF16658">
    <property type="entry name" value="RF3_C"/>
    <property type="match status" value="1"/>
</dbReference>
<dbReference type="PRINTS" id="PR00315">
    <property type="entry name" value="ELONGATNFCT"/>
</dbReference>
<dbReference type="PRINTS" id="PR01037">
    <property type="entry name" value="TCRTETOQM"/>
</dbReference>
<dbReference type="SUPFAM" id="SSF54980">
    <property type="entry name" value="EF-G C-terminal domain-like"/>
    <property type="match status" value="1"/>
</dbReference>
<dbReference type="SUPFAM" id="SSF52540">
    <property type="entry name" value="P-loop containing nucleoside triphosphate hydrolases"/>
    <property type="match status" value="1"/>
</dbReference>
<dbReference type="SUPFAM" id="SSF50447">
    <property type="entry name" value="Translation proteins"/>
    <property type="match status" value="1"/>
</dbReference>
<dbReference type="PROSITE" id="PS00301">
    <property type="entry name" value="G_TR_1"/>
    <property type="match status" value="1"/>
</dbReference>
<dbReference type="PROSITE" id="PS51722">
    <property type="entry name" value="G_TR_2"/>
    <property type="match status" value="1"/>
</dbReference>
<sequence length="514" mass="58491">MNIQEEIKKRRTFAIISHPDAGKTTITEQLLYFGGEIREAGTVKGKKTGTFAKSDWMDIEKQRGISVTSSVMQFDYDGKRVNXLDTPGHEDFSEDTYRTLMAVDAAVMVVDSAKGIEAQTXKLFEVVKHRGIPVFTFMNKLDRDGREPLDLLQELEEILGIASYPMNWPIGMGKAFEGLYDLYNQRLELYKGDERFASLEDGDKLFGSNPFYEQVKDDIELLNEAGNEFSEEAILAGELTPVFFGSALTNFGVQTFLETFLKFAPEPHGHKKTDGEIVDPYDKDFSGFVFKIQANMDPRHRDRIAFVRIVSGEFERGMSVNLPRTGKGAKLSNVTQFMAESRENVINAVAGDIIGVYDTGTYQVGDTLTVGKNKFEFEPLPTFTPEIFMKVSAKNVMKQKSFHKGIEQLVQEGAIQLYKNYQTGEYMLGAVGQLQFEVFKHRMEGEYNAEVVMNPMGKKTVRWIKPEDLDERMSSSRNXLAKDRFDQPVFLFENDFALRWFADKYPDVELEEKM</sequence>
<keyword id="KW-0963">Cytoplasm</keyword>
<keyword id="KW-0342">GTP-binding</keyword>
<keyword id="KW-0547">Nucleotide-binding</keyword>
<keyword id="KW-0648">Protein biosynthesis</keyword>
<gene>
    <name evidence="1" type="primary">prfC</name>
    <name type="ordered locus">SPG_0402</name>
</gene>
<name>RF3_STRP4</name>
<evidence type="ECO:0000255" key="1">
    <source>
        <dbReference type="HAMAP-Rule" id="MF_00072"/>
    </source>
</evidence>
<reference key="1">
    <citation type="journal article" date="2001" name="Microb. Drug Resist.">
        <title>Annotated draft genomic sequence from a Streptococcus pneumoniae type 19F clinical isolate.</title>
        <authorList>
            <person name="Dopazo J."/>
            <person name="Mendoza A."/>
            <person name="Herrero J."/>
            <person name="Caldara F."/>
            <person name="Humbert Y."/>
            <person name="Friedli L."/>
            <person name="Guerrier M."/>
            <person name="Grand-Schenk E."/>
            <person name="Gandin C."/>
            <person name="de Francesco M."/>
            <person name="Polissi A."/>
            <person name="Buell G."/>
            <person name="Feger G."/>
            <person name="Garcia E."/>
            <person name="Peitsch M."/>
            <person name="Garcia-Bustos J.F."/>
        </authorList>
    </citation>
    <scope>NUCLEOTIDE SEQUENCE [LARGE SCALE GENOMIC DNA]</scope>
    <source>
        <strain>G54</strain>
    </source>
</reference>
<reference key="2">
    <citation type="submission" date="2008-03" db="EMBL/GenBank/DDBJ databases">
        <title>Pneumococcal beta glucoside metabolism investigated by whole genome comparison.</title>
        <authorList>
            <person name="Mulas L."/>
            <person name="Trappetti C."/>
            <person name="Hakenbeck R."/>
            <person name="Iannelli F."/>
            <person name="Pozzi G."/>
            <person name="Davidsen T.M."/>
            <person name="Tettelin H."/>
            <person name="Oggioni M."/>
        </authorList>
    </citation>
    <scope>NUCLEOTIDE SEQUENCE [LARGE SCALE GENOMIC DNA]</scope>
    <source>
        <strain>G54</strain>
    </source>
</reference>